<evidence type="ECO:0000250" key="1">
    <source>
        <dbReference type="UniProtKB" id="P74879"/>
    </source>
</evidence>
<evidence type="ECO:0000255" key="2">
    <source>
        <dbReference type="HAMAP-Rule" id="MF_01882"/>
    </source>
</evidence>
<evidence type="ECO:0000305" key="3"/>
<accession>B7LTX5</accession>
<feature type="chain" id="PRO_0000398198" description="Propionate kinase">
    <location>
        <begin position="1"/>
        <end position="404"/>
    </location>
</feature>
<organism>
    <name type="scientific">Escherichia fergusonii (strain ATCC 35469 / DSM 13698 / CCUG 18766 / IAM 14443 / JCM 21226 / LMG 7866 / NBRC 102419 / NCTC 12128 / CDC 0568-73)</name>
    <dbReference type="NCBI Taxonomy" id="585054"/>
    <lineage>
        <taxon>Bacteria</taxon>
        <taxon>Pseudomonadati</taxon>
        <taxon>Pseudomonadota</taxon>
        <taxon>Gammaproteobacteria</taxon>
        <taxon>Enterobacterales</taxon>
        <taxon>Enterobacteriaceae</taxon>
        <taxon>Escherichia</taxon>
    </lineage>
</organism>
<sequence>MSHKIMAINAGSSSLKFQLLAMPEGEILCQGIIERIGLADARLVVKTATEKWQEITPVADHREAVTLLLEQLINRKIINSLHDIDATGHRVAHGGETFKDSALVTDDVMAEIERLAELAPLHNPVNLLGINIFRQLLPSAPTIAVFDTAFHQTLEMPAYIYPLPWRYYHELGIRRYGFHGTSHKYVSGKLAEKLGVPLSALRVVCCHLGNGSSVCAIKGGKSVNTSMGFTPQSGVMMGTRSGDIDPSILPWIALREGKTPQELNQLLNNESGLLGVSGVSPDFRDIEQAAENGNQQAQLALALFAERIRATIGSYVLQMGGLDALIFTGGIGENSARARAAICNNLHFLGLSIDADKNQHNATFIQSEQAMVKVAVINTNEELMIARDVMRIALPEPALQEVLA</sequence>
<name>PDUW_ESCF3</name>
<reference key="1">
    <citation type="journal article" date="2009" name="PLoS Genet.">
        <title>Organised genome dynamics in the Escherichia coli species results in highly diverse adaptive paths.</title>
        <authorList>
            <person name="Touchon M."/>
            <person name="Hoede C."/>
            <person name="Tenaillon O."/>
            <person name="Barbe V."/>
            <person name="Baeriswyl S."/>
            <person name="Bidet P."/>
            <person name="Bingen E."/>
            <person name="Bonacorsi S."/>
            <person name="Bouchier C."/>
            <person name="Bouvet O."/>
            <person name="Calteau A."/>
            <person name="Chiapello H."/>
            <person name="Clermont O."/>
            <person name="Cruveiller S."/>
            <person name="Danchin A."/>
            <person name="Diard M."/>
            <person name="Dossat C."/>
            <person name="Karoui M.E."/>
            <person name="Frapy E."/>
            <person name="Garry L."/>
            <person name="Ghigo J.M."/>
            <person name="Gilles A.M."/>
            <person name="Johnson J."/>
            <person name="Le Bouguenec C."/>
            <person name="Lescat M."/>
            <person name="Mangenot S."/>
            <person name="Martinez-Jehanne V."/>
            <person name="Matic I."/>
            <person name="Nassif X."/>
            <person name="Oztas S."/>
            <person name="Petit M.A."/>
            <person name="Pichon C."/>
            <person name="Rouy Z."/>
            <person name="Ruf C.S."/>
            <person name="Schneider D."/>
            <person name="Tourret J."/>
            <person name="Vacherie B."/>
            <person name="Vallenet D."/>
            <person name="Medigue C."/>
            <person name="Rocha E.P.C."/>
            <person name="Denamur E."/>
        </authorList>
    </citation>
    <scope>NUCLEOTIDE SEQUENCE [LARGE SCALE GENOMIC DNA]</scope>
    <source>
        <strain>ATCC 35469 / DSM 13698 / BCRC 15582 / CCUG 18766 / IAM 14443 / JCM 21226 / LMG 7866 / NBRC 102419 / NCTC 12128 / CDC 0568-73</strain>
    </source>
</reference>
<proteinExistence type="inferred from homology"/>
<protein>
    <recommendedName>
        <fullName evidence="2">Propionate kinase</fullName>
        <ecNumber evidence="2">2.7.2.15</ecNumber>
    </recommendedName>
</protein>
<dbReference type="EC" id="2.7.2.15" evidence="2"/>
<dbReference type="EMBL" id="CU928158">
    <property type="protein sequence ID" value="CAQ89532.1"/>
    <property type="molecule type" value="Genomic_DNA"/>
</dbReference>
<dbReference type="RefSeq" id="WP_000018485.1">
    <property type="nucleotide sequence ID" value="NC_011740.1"/>
</dbReference>
<dbReference type="SMR" id="B7LTX5"/>
<dbReference type="GeneID" id="75056939"/>
<dbReference type="KEGG" id="efe:EFER_2027"/>
<dbReference type="HOGENOM" id="CLU_020352_0_1_6"/>
<dbReference type="OrthoDB" id="9802453at2"/>
<dbReference type="UniPathway" id="UPA00621"/>
<dbReference type="Proteomes" id="UP000000745">
    <property type="component" value="Chromosome"/>
</dbReference>
<dbReference type="GO" id="GO:0005737">
    <property type="term" value="C:cytoplasm"/>
    <property type="evidence" value="ECO:0007669"/>
    <property type="project" value="UniProtKB-SubCell"/>
</dbReference>
<dbReference type="GO" id="GO:0008776">
    <property type="term" value="F:acetate kinase activity"/>
    <property type="evidence" value="ECO:0007669"/>
    <property type="project" value="TreeGrafter"/>
</dbReference>
<dbReference type="GO" id="GO:0005524">
    <property type="term" value="F:ATP binding"/>
    <property type="evidence" value="ECO:0007669"/>
    <property type="project" value="UniProtKB-KW"/>
</dbReference>
<dbReference type="GO" id="GO:0008980">
    <property type="term" value="F:propionate kinase activity"/>
    <property type="evidence" value="ECO:0007669"/>
    <property type="project" value="UniProtKB-UniRule"/>
</dbReference>
<dbReference type="GO" id="GO:0006083">
    <property type="term" value="P:acetate metabolic process"/>
    <property type="evidence" value="ECO:0007669"/>
    <property type="project" value="TreeGrafter"/>
</dbReference>
<dbReference type="GO" id="GO:0051144">
    <property type="term" value="P:propanediol catabolic process"/>
    <property type="evidence" value="ECO:0007669"/>
    <property type="project" value="UniProtKB-UniPathway"/>
</dbReference>
<dbReference type="GO" id="GO:0019543">
    <property type="term" value="P:propionate catabolic process"/>
    <property type="evidence" value="ECO:0007669"/>
    <property type="project" value="InterPro"/>
</dbReference>
<dbReference type="CDD" id="cd24010">
    <property type="entry name" value="ASKHA_NBD_AcK_PK"/>
    <property type="match status" value="1"/>
</dbReference>
<dbReference type="Gene3D" id="3.30.420.40">
    <property type="match status" value="2"/>
</dbReference>
<dbReference type="HAMAP" id="MF_00020">
    <property type="entry name" value="Acetate_kinase"/>
    <property type="match status" value="1"/>
</dbReference>
<dbReference type="HAMAP" id="MF_01882">
    <property type="entry name" value="Propion_kin_subfam2"/>
    <property type="match status" value="1"/>
</dbReference>
<dbReference type="InterPro" id="IPR004372">
    <property type="entry name" value="Ac/propionate_kinase"/>
</dbReference>
<dbReference type="InterPro" id="IPR000890">
    <property type="entry name" value="Aliphatic_acid_kin_short-chain"/>
</dbReference>
<dbReference type="InterPro" id="IPR023865">
    <property type="entry name" value="Aliphatic_acid_kinase_CS"/>
</dbReference>
<dbReference type="InterPro" id="IPR043129">
    <property type="entry name" value="ATPase_NBD"/>
</dbReference>
<dbReference type="InterPro" id="IPR024896">
    <property type="entry name" value="Propionate_kinase_PduW"/>
</dbReference>
<dbReference type="NCBIfam" id="TIGR00016">
    <property type="entry name" value="ackA"/>
    <property type="match status" value="1"/>
</dbReference>
<dbReference type="NCBIfam" id="NF009063">
    <property type="entry name" value="PRK12397.1"/>
    <property type="match status" value="1"/>
</dbReference>
<dbReference type="PANTHER" id="PTHR21060">
    <property type="entry name" value="ACETATE KINASE"/>
    <property type="match status" value="1"/>
</dbReference>
<dbReference type="PANTHER" id="PTHR21060:SF15">
    <property type="entry name" value="ACETATE KINASE-RELATED"/>
    <property type="match status" value="1"/>
</dbReference>
<dbReference type="Pfam" id="PF00871">
    <property type="entry name" value="Acetate_kinase"/>
    <property type="match status" value="1"/>
</dbReference>
<dbReference type="PIRSF" id="PIRSF000722">
    <property type="entry name" value="Acetate_prop_kin"/>
    <property type="match status" value="1"/>
</dbReference>
<dbReference type="PRINTS" id="PR00471">
    <property type="entry name" value="ACETATEKNASE"/>
</dbReference>
<dbReference type="SUPFAM" id="SSF53067">
    <property type="entry name" value="Actin-like ATPase domain"/>
    <property type="match status" value="2"/>
</dbReference>
<dbReference type="PROSITE" id="PS01075">
    <property type="entry name" value="ACETATE_KINASE_1"/>
    <property type="match status" value="1"/>
</dbReference>
<dbReference type="PROSITE" id="PS01076">
    <property type="entry name" value="ACETATE_KINASE_2"/>
    <property type="match status" value="1"/>
</dbReference>
<gene>
    <name evidence="2" type="primary">pduW</name>
    <name type="ordered locus">EFER_2027</name>
</gene>
<comment type="function">
    <text evidence="1">Works with phosphate acetyltransferase (pta) to capture exogenous propionate and regenerate propionyl-CoA during degradation of 1,2-propanediol (1,2-PD).</text>
</comment>
<comment type="catalytic activity">
    <reaction evidence="2">
        <text>propanoate + ATP = propanoyl phosphate + ADP</text>
        <dbReference type="Rhea" id="RHEA:23148"/>
        <dbReference type="ChEBI" id="CHEBI:17272"/>
        <dbReference type="ChEBI" id="CHEBI:30616"/>
        <dbReference type="ChEBI" id="CHEBI:58933"/>
        <dbReference type="ChEBI" id="CHEBI:456216"/>
        <dbReference type="EC" id="2.7.2.15"/>
    </reaction>
</comment>
<comment type="pathway">
    <text evidence="1 3">Polyol metabolism; 1,2-propanediol degradation.</text>
</comment>
<comment type="subcellular location">
    <subcellularLocation>
        <location evidence="2">Cytoplasm</location>
    </subcellularLocation>
</comment>
<comment type="similarity">
    <text evidence="2">Belongs to the acetokinase family. PduW subfamily.</text>
</comment>
<keyword id="KW-0067">ATP-binding</keyword>
<keyword id="KW-0963">Cytoplasm</keyword>
<keyword id="KW-0418">Kinase</keyword>
<keyword id="KW-0547">Nucleotide-binding</keyword>
<keyword id="KW-0808">Transferase</keyword>